<reference key="1">
    <citation type="submission" date="2007-11" db="EMBL/GenBank/DDBJ databases">
        <authorList>
            <consortium name="The Salmonella enterica serovar Paratyphi B Genome Sequencing Project"/>
            <person name="McClelland M."/>
            <person name="Sanderson E.K."/>
            <person name="Porwollik S."/>
            <person name="Spieth J."/>
            <person name="Clifton W.S."/>
            <person name="Fulton R."/>
            <person name="Cordes M."/>
            <person name="Wollam A."/>
            <person name="Shah N."/>
            <person name="Pepin K."/>
            <person name="Bhonagiri V."/>
            <person name="Nash W."/>
            <person name="Johnson M."/>
            <person name="Thiruvilangam P."/>
            <person name="Wilson R."/>
        </authorList>
    </citation>
    <scope>NUCLEOTIDE SEQUENCE [LARGE SCALE GENOMIC DNA]</scope>
    <source>
        <strain>ATCC BAA-1250 / SPB7</strain>
    </source>
</reference>
<name>LPXA_SALPB</name>
<feature type="chain" id="PRO_1000080214" description="Acyl-[acyl-carrier-protein]--UDP-N-acetylglucosamine O-acyltransferase">
    <location>
        <begin position="1"/>
        <end position="262"/>
    </location>
</feature>
<organism>
    <name type="scientific">Salmonella paratyphi B (strain ATCC BAA-1250 / SPB7)</name>
    <dbReference type="NCBI Taxonomy" id="1016998"/>
    <lineage>
        <taxon>Bacteria</taxon>
        <taxon>Pseudomonadati</taxon>
        <taxon>Pseudomonadota</taxon>
        <taxon>Gammaproteobacteria</taxon>
        <taxon>Enterobacterales</taxon>
        <taxon>Enterobacteriaceae</taxon>
        <taxon>Salmonella</taxon>
    </lineage>
</organism>
<accession>A9N0T1</accession>
<gene>
    <name evidence="1" type="primary">lpxA</name>
    <name type="ordered locus">SPAB_00292</name>
</gene>
<keyword id="KW-0012">Acyltransferase</keyword>
<keyword id="KW-0963">Cytoplasm</keyword>
<keyword id="KW-0441">Lipid A biosynthesis</keyword>
<keyword id="KW-0444">Lipid biosynthesis</keyword>
<keyword id="KW-0443">Lipid metabolism</keyword>
<keyword id="KW-0677">Repeat</keyword>
<keyword id="KW-0808">Transferase</keyword>
<dbReference type="EC" id="2.3.1.129" evidence="1"/>
<dbReference type="EMBL" id="CP000886">
    <property type="protein sequence ID" value="ABX65733.1"/>
    <property type="molecule type" value="Genomic_DNA"/>
</dbReference>
<dbReference type="RefSeq" id="WP_000565950.1">
    <property type="nucleotide sequence ID" value="NC_010102.1"/>
</dbReference>
<dbReference type="SMR" id="A9N0T1"/>
<dbReference type="KEGG" id="spq:SPAB_00292"/>
<dbReference type="PATRIC" id="fig|1016998.12.peg.280"/>
<dbReference type="HOGENOM" id="CLU_061249_0_0_6"/>
<dbReference type="BioCyc" id="SENT1016998:SPAB_RS01180-MONOMER"/>
<dbReference type="UniPathway" id="UPA00359">
    <property type="reaction ID" value="UER00477"/>
</dbReference>
<dbReference type="Proteomes" id="UP000008556">
    <property type="component" value="Chromosome"/>
</dbReference>
<dbReference type="GO" id="GO:0005737">
    <property type="term" value="C:cytoplasm"/>
    <property type="evidence" value="ECO:0007669"/>
    <property type="project" value="UniProtKB-SubCell"/>
</dbReference>
<dbReference type="GO" id="GO:0016020">
    <property type="term" value="C:membrane"/>
    <property type="evidence" value="ECO:0007669"/>
    <property type="project" value="GOC"/>
</dbReference>
<dbReference type="GO" id="GO:0008780">
    <property type="term" value="F:acyl-[acyl-carrier-protein]-UDP-N-acetylglucosamine O-acyltransferase activity"/>
    <property type="evidence" value="ECO:0007669"/>
    <property type="project" value="UniProtKB-UniRule"/>
</dbReference>
<dbReference type="GO" id="GO:0009245">
    <property type="term" value="P:lipid A biosynthetic process"/>
    <property type="evidence" value="ECO:0007669"/>
    <property type="project" value="UniProtKB-UniRule"/>
</dbReference>
<dbReference type="CDD" id="cd03351">
    <property type="entry name" value="LbH_UDP-GlcNAc_AT"/>
    <property type="match status" value="1"/>
</dbReference>
<dbReference type="FunFam" id="2.160.10.10:FF:000003">
    <property type="entry name" value="Acyl-[acyl-carrier-protein]--UDP-N-acetylglucosamine O-acyltransferase"/>
    <property type="match status" value="1"/>
</dbReference>
<dbReference type="Gene3D" id="2.160.10.10">
    <property type="entry name" value="Hexapeptide repeat proteins"/>
    <property type="match status" value="1"/>
</dbReference>
<dbReference type="Gene3D" id="1.20.1180.10">
    <property type="entry name" value="Udp N-acetylglucosamine O-acyltransferase, C-terminal domain"/>
    <property type="match status" value="1"/>
</dbReference>
<dbReference type="HAMAP" id="MF_00387">
    <property type="entry name" value="LpxA"/>
    <property type="match status" value="1"/>
</dbReference>
<dbReference type="InterPro" id="IPR029098">
    <property type="entry name" value="Acetyltransf_C"/>
</dbReference>
<dbReference type="InterPro" id="IPR037157">
    <property type="entry name" value="Acetyltransf_C_sf"/>
</dbReference>
<dbReference type="InterPro" id="IPR001451">
    <property type="entry name" value="Hexapep"/>
</dbReference>
<dbReference type="InterPro" id="IPR018357">
    <property type="entry name" value="Hexapep_transf_CS"/>
</dbReference>
<dbReference type="InterPro" id="IPR010137">
    <property type="entry name" value="Lipid_A_LpxA"/>
</dbReference>
<dbReference type="InterPro" id="IPR011004">
    <property type="entry name" value="Trimer_LpxA-like_sf"/>
</dbReference>
<dbReference type="NCBIfam" id="TIGR01852">
    <property type="entry name" value="lipid_A_lpxA"/>
    <property type="match status" value="1"/>
</dbReference>
<dbReference type="NCBIfam" id="NF003657">
    <property type="entry name" value="PRK05289.1"/>
    <property type="match status" value="1"/>
</dbReference>
<dbReference type="PANTHER" id="PTHR43480">
    <property type="entry name" value="ACYL-[ACYL-CARRIER-PROTEIN]--UDP-N-ACETYLGLUCOSAMINE O-ACYLTRANSFERASE"/>
    <property type="match status" value="1"/>
</dbReference>
<dbReference type="PANTHER" id="PTHR43480:SF1">
    <property type="entry name" value="ACYL-[ACYL-CARRIER-PROTEIN]--UDP-N-ACETYLGLUCOSAMINE O-ACYLTRANSFERASE, MITOCHONDRIAL-RELATED"/>
    <property type="match status" value="1"/>
</dbReference>
<dbReference type="Pfam" id="PF13720">
    <property type="entry name" value="Acetyltransf_11"/>
    <property type="match status" value="1"/>
</dbReference>
<dbReference type="Pfam" id="PF00132">
    <property type="entry name" value="Hexapep"/>
    <property type="match status" value="2"/>
</dbReference>
<dbReference type="PIRSF" id="PIRSF000456">
    <property type="entry name" value="UDP-GlcNAc_acltr"/>
    <property type="match status" value="1"/>
</dbReference>
<dbReference type="SUPFAM" id="SSF51161">
    <property type="entry name" value="Trimeric LpxA-like enzymes"/>
    <property type="match status" value="1"/>
</dbReference>
<dbReference type="PROSITE" id="PS00101">
    <property type="entry name" value="HEXAPEP_TRANSFERASES"/>
    <property type="match status" value="2"/>
</dbReference>
<comment type="function">
    <text evidence="1">Involved in the biosynthesis of lipid A, a phosphorylated glycolipid that anchors the lipopolysaccharide to the outer membrane of the cell.</text>
</comment>
<comment type="catalytic activity">
    <reaction evidence="1">
        <text>a (3R)-hydroxyacyl-[ACP] + UDP-N-acetyl-alpha-D-glucosamine = a UDP-3-O-[(3R)-3-hydroxyacyl]-N-acetyl-alpha-D-glucosamine + holo-[ACP]</text>
        <dbReference type="Rhea" id="RHEA:67812"/>
        <dbReference type="Rhea" id="RHEA-COMP:9685"/>
        <dbReference type="Rhea" id="RHEA-COMP:9945"/>
        <dbReference type="ChEBI" id="CHEBI:57705"/>
        <dbReference type="ChEBI" id="CHEBI:64479"/>
        <dbReference type="ChEBI" id="CHEBI:78827"/>
        <dbReference type="ChEBI" id="CHEBI:173225"/>
        <dbReference type="EC" id="2.3.1.129"/>
    </reaction>
</comment>
<comment type="pathway">
    <text evidence="1">Glycolipid biosynthesis; lipid IV(A) biosynthesis; lipid IV(A) from (3R)-3-hydroxytetradecanoyl-[acyl-carrier-protein] and UDP-N-acetyl-alpha-D-glucosamine: step 1/6.</text>
</comment>
<comment type="subunit">
    <text evidence="1">Homotrimer.</text>
</comment>
<comment type="subcellular location">
    <subcellularLocation>
        <location evidence="1">Cytoplasm</location>
    </subcellularLocation>
</comment>
<comment type="similarity">
    <text evidence="1">Belongs to the transferase hexapeptide repeat family. LpxA subfamily.</text>
</comment>
<protein>
    <recommendedName>
        <fullName evidence="1">Acyl-[acyl-carrier-protein]--UDP-N-acetylglucosamine O-acyltransferase</fullName>
        <shortName evidence="1">UDP-N-acetylglucosamine acyltransferase</shortName>
        <ecNumber evidence="1">2.3.1.129</ecNumber>
    </recommendedName>
</protein>
<evidence type="ECO:0000255" key="1">
    <source>
        <dbReference type="HAMAP-Rule" id="MF_00387"/>
    </source>
</evidence>
<sequence>MIDKSAFIHPTAIVEDGAVIGANAHIGPFCIVGPQVEIGEGTVLKSHVVVNGQTKIGRDNEIYQFASIGEVNQDLKYAGEPTRVEIGDRNRIRESVTIHRGTVQGGGLTKVGSDNLLMINAHVAHDCTVGNRCILANNATLAGHVSVDDFAIIGGMTAVHQFCIIGAHVMVGGCSGVAQDVPPYVIAQGNHATPFGVNIEGLKRRGFSREGLVAIRNAYKLLYRSGKTLDEAKLEIAELAEKHPEVKAFTEFFERSTRGPIR</sequence>
<proteinExistence type="inferred from homology"/>